<reference key="1">
    <citation type="journal article" date="1998" name="Gene">
        <title>Cloning and comparative sequence analysis of TP53 in xiphophorus fish hybrid melanoma models.</title>
        <authorList>
            <person name="Kazianis S."/>
            <person name="Gan L."/>
            <person name="Della Coletta L."/>
            <person name="Santi B."/>
            <person name="Morizot D.C."/>
            <person name="Nairn R.S."/>
        </authorList>
    </citation>
    <scope>NUCLEOTIDE SEQUENCE [GENOMIC DNA]</scope>
    <source>
        <strain>Rio Jamapa / JP 163 A</strain>
    </source>
</reference>
<reference key="2">
    <citation type="submission" date="1995-08" db="EMBL/GenBank/DDBJ databases">
        <authorList>
            <person name="Nairn R.S."/>
        </authorList>
    </citation>
    <scope>NUCLEOTIDE SEQUENCE OF 190-254</scope>
    <source>
        <strain>Rio Jamapa / JP 163 A</strain>
    </source>
</reference>
<gene>
    <name type="primary">tp53</name>
    <name type="synonym">p53</name>
</gene>
<feature type="chain" id="PRO_0000185724" description="Cellular tumor antigen p53">
    <location>
        <begin position="1"/>
        <end position="342"/>
    </location>
</feature>
<feature type="DNA-binding region" evidence="1">
    <location>
        <begin position="68"/>
        <end position="255"/>
    </location>
</feature>
<feature type="region of interest" description="Transcription activation (acidic)">
    <location>
        <begin position="1"/>
        <end position="35"/>
    </location>
</feature>
<feature type="region of interest" description="Interaction with DNA" evidence="1">
    <location>
        <begin position="236"/>
        <end position="243"/>
    </location>
</feature>
<feature type="region of interest" description="Disordered" evidence="3">
    <location>
        <begin position="244"/>
        <end position="287"/>
    </location>
</feature>
<feature type="region of interest" description="Oligomerization">
    <location>
        <begin position="288"/>
        <end position="317"/>
    </location>
</feature>
<feature type="region of interest" description="Disordered" evidence="3">
    <location>
        <begin position="318"/>
        <end position="342"/>
    </location>
</feature>
<feature type="region of interest" description="Basic (repression of DNA-binding)">
    <location>
        <begin position="319"/>
        <end position="336"/>
    </location>
</feature>
<feature type="short sequence motif" description="Bipartite nuclear localization signal" evidence="1">
    <location>
        <begin position="261"/>
        <end position="278"/>
    </location>
</feature>
<feature type="short sequence motif" description="Nuclear export signal" evidence="1">
    <location>
        <begin position="302"/>
        <end position="313"/>
    </location>
</feature>
<feature type="compositionally biased region" description="Basic and acidic residues" evidence="3">
    <location>
        <begin position="244"/>
        <end position="256"/>
    </location>
</feature>
<feature type="compositionally biased region" description="Low complexity" evidence="3">
    <location>
        <begin position="271"/>
        <end position="282"/>
    </location>
</feature>
<feature type="binding site" evidence="1">
    <location>
        <position position="142"/>
    </location>
    <ligand>
        <name>Zn(2+)</name>
        <dbReference type="ChEBI" id="CHEBI:29105"/>
    </ligand>
</feature>
<feature type="binding site" evidence="1">
    <location>
        <position position="145"/>
    </location>
    <ligand>
        <name>Zn(2+)</name>
        <dbReference type="ChEBI" id="CHEBI:29105"/>
    </ligand>
</feature>
<feature type="binding site" evidence="1">
    <location>
        <position position="201"/>
    </location>
    <ligand>
        <name>Zn(2+)</name>
        <dbReference type="ChEBI" id="CHEBI:29105"/>
    </ligand>
</feature>
<feature type="binding site" evidence="1">
    <location>
        <position position="205"/>
    </location>
    <ligand>
        <name>Zn(2+)</name>
        <dbReference type="ChEBI" id="CHEBI:29105"/>
    </ligand>
</feature>
<feature type="site" description="Interaction with DNA" evidence="1">
    <location>
        <position position="86"/>
    </location>
</feature>
<evidence type="ECO:0000250" key="1"/>
<evidence type="ECO:0000250" key="2">
    <source>
        <dbReference type="UniProtKB" id="P04637"/>
    </source>
</evidence>
<evidence type="ECO:0000256" key="3">
    <source>
        <dbReference type="SAM" id="MobiDB-lite"/>
    </source>
</evidence>
<evidence type="ECO:0000305" key="4"/>
<dbReference type="EMBL" id="AF043947">
    <property type="protein sequence ID" value="AAC31134.1"/>
    <property type="molecule type" value="mRNA"/>
</dbReference>
<dbReference type="EMBL" id="AF043948">
    <property type="protein sequence ID" value="AAC26190.1"/>
    <property type="molecule type" value="Genomic_DNA"/>
</dbReference>
<dbReference type="EMBL" id="U34751">
    <property type="protein sequence ID" value="AAA92052.1"/>
    <property type="molecule type" value="Genomic_DNA"/>
</dbReference>
<dbReference type="RefSeq" id="NP_001273218.1">
    <property type="nucleotide sequence ID" value="NM_001286289.1"/>
</dbReference>
<dbReference type="RefSeq" id="XP_023201305.1">
    <property type="nucleotide sequence ID" value="XM_023345537.1"/>
</dbReference>
<dbReference type="RefSeq" id="XP_023201306.1">
    <property type="nucleotide sequence ID" value="XM_023345538.1"/>
</dbReference>
<dbReference type="SMR" id="Q92143"/>
<dbReference type="FunCoup" id="Q92143">
    <property type="interactions" value="1250"/>
</dbReference>
<dbReference type="STRING" id="8083.ENSXMAP00000028829"/>
<dbReference type="Ensembl" id="ENSXMAT00000021666.1">
    <property type="protein sequence ID" value="ENSXMAP00000028829.1"/>
    <property type="gene ID" value="ENSXMAG00000015716.2"/>
</dbReference>
<dbReference type="GeneID" id="102219062"/>
<dbReference type="KEGG" id="xma:102219062"/>
<dbReference type="CTD" id="7157"/>
<dbReference type="eggNOG" id="ENOG502QVY3">
    <property type="taxonomic scope" value="Eukaryota"/>
</dbReference>
<dbReference type="GeneTree" id="ENSGT00950000183153"/>
<dbReference type="HOGENOM" id="CLU_019621_0_0_1"/>
<dbReference type="InParanoid" id="Q92143"/>
<dbReference type="OMA" id="PILTIMT"/>
<dbReference type="OrthoDB" id="5915660at2759"/>
<dbReference type="Proteomes" id="UP000002852">
    <property type="component" value="Unassembled WGS sequence"/>
</dbReference>
<dbReference type="GO" id="GO:0005737">
    <property type="term" value="C:cytoplasm"/>
    <property type="evidence" value="ECO:0000250"/>
    <property type="project" value="UniProtKB"/>
</dbReference>
<dbReference type="GO" id="GO:0005739">
    <property type="term" value="C:mitochondrion"/>
    <property type="evidence" value="ECO:0000250"/>
    <property type="project" value="UniProtKB"/>
</dbReference>
<dbReference type="GO" id="GO:0005634">
    <property type="term" value="C:nucleus"/>
    <property type="evidence" value="ECO:0000250"/>
    <property type="project" value="UniProtKB"/>
</dbReference>
<dbReference type="GO" id="GO:0000981">
    <property type="term" value="F:DNA-binding transcription factor activity, RNA polymerase II-specific"/>
    <property type="evidence" value="ECO:0007669"/>
    <property type="project" value="TreeGrafter"/>
</dbReference>
<dbReference type="GO" id="GO:0046872">
    <property type="term" value="F:metal ion binding"/>
    <property type="evidence" value="ECO:0007669"/>
    <property type="project" value="UniProtKB-KW"/>
</dbReference>
<dbReference type="GO" id="GO:0140693">
    <property type="term" value="F:molecular condensate scaffold activity"/>
    <property type="evidence" value="ECO:0000250"/>
    <property type="project" value="UniProtKB"/>
</dbReference>
<dbReference type="GO" id="GO:1990841">
    <property type="term" value="F:promoter-specific chromatin binding"/>
    <property type="evidence" value="ECO:0000250"/>
    <property type="project" value="UniProtKB"/>
</dbReference>
<dbReference type="GO" id="GO:0000978">
    <property type="term" value="F:RNA polymerase II cis-regulatory region sequence-specific DNA binding"/>
    <property type="evidence" value="ECO:0007669"/>
    <property type="project" value="TreeGrafter"/>
</dbReference>
<dbReference type="GO" id="GO:0006915">
    <property type="term" value="P:apoptotic process"/>
    <property type="evidence" value="ECO:0007669"/>
    <property type="project" value="UniProtKB-KW"/>
</dbReference>
<dbReference type="GO" id="GO:0006974">
    <property type="term" value="P:DNA damage response"/>
    <property type="evidence" value="ECO:0000250"/>
    <property type="project" value="UniProtKB"/>
</dbReference>
<dbReference type="GO" id="GO:0045944">
    <property type="term" value="P:positive regulation of transcription by RNA polymerase II"/>
    <property type="evidence" value="ECO:0000250"/>
    <property type="project" value="UniProtKB"/>
</dbReference>
<dbReference type="GO" id="GO:0051262">
    <property type="term" value="P:protein tetramerization"/>
    <property type="evidence" value="ECO:0007669"/>
    <property type="project" value="InterPro"/>
</dbReference>
<dbReference type="CDD" id="cd08367">
    <property type="entry name" value="P53"/>
    <property type="match status" value="1"/>
</dbReference>
<dbReference type="Gene3D" id="2.60.40.720">
    <property type="match status" value="1"/>
</dbReference>
<dbReference type="Gene3D" id="4.10.170.10">
    <property type="entry name" value="p53-like tetramerisation domain"/>
    <property type="match status" value="1"/>
</dbReference>
<dbReference type="InterPro" id="IPR008967">
    <property type="entry name" value="p53-like_TF_DNA-bd_sf"/>
</dbReference>
<dbReference type="InterPro" id="IPR012346">
    <property type="entry name" value="p53/RUNT-type_TF_DNA-bd_sf"/>
</dbReference>
<dbReference type="InterPro" id="IPR011615">
    <property type="entry name" value="p53_DNA-bd"/>
</dbReference>
<dbReference type="InterPro" id="IPR036674">
    <property type="entry name" value="p53_tetramer_sf"/>
</dbReference>
<dbReference type="InterPro" id="IPR010991">
    <property type="entry name" value="p53_tetrameristn"/>
</dbReference>
<dbReference type="InterPro" id="IPR013872">
    <property type="entry name" value="p53_transactivation_domain"/>
</dbReference>
<dbReference type="InterPro" id="IPR002117">
    <property type="entry name" value="p53_tumour_suppressor"/>
</dbReference>
<dbReference type="PANTHER" id="PTHR11447">
    <property type="entry name" value="CELLULAR TUMOR ANTIGEN P53"/>
    <property type="match status" value="1"/>
</dbReference>
<dbReference type="PANTHER" id="PTHR11447:SF6">
    <property type="entry name" value="CELLULAR TUMOR ANTIGEN P53"/>
    <property type="match status" value="1"/>
</dbReference>
<dbReference type="Pfam" id="PF00870">
    <property type="entry name" value="P53"/>
    <property type="match status" value="1"/>
</dbReference>
<dbReference type="Pfam" id="PF08563">
    <property type="entry name" value="P53_TAD"/>
    <property type="match status" value="1"/>
</dbReference>
<dbReference type="Pfam" id="PF07710">
    <property type="entry name" value="P53_tetramer"/>
    <property type="match status" value="1"/>
</dbReference>
<dbReference type="PRINTS" id="PR00386">
    <property type="entry name" value="P53SUPPRESSR"/>
</dbReference>
<dbReference type="SUPFAM" id="SSF47719">
    <property type="entry name" value="p53 tetramerization domain"/>
    <property type="match status" value="1"/>
</dbReference>
<dbReference type="SUPFAM" id="SSF49417">
    <property type="entry name" value="p53-like transcription factors"/>
    <property type="match status" value="1"/>
</dbReference>
<dbReference type="PROSITE" id="PS00348">
    <property type="entry name" value="P53"/>
    <property type="match status" value="1"/>
</dbReference>
<accession>Q92143</accession>
<protein>
    <recommendedName>
        <fullName>Cellular tumor antigen p53</fullName>
    </recommendedName>
    <alternativeName>
        <fullName>Tumor suppressor p53</fullName>
    </alternativeName>
</protein>
<comment type="function">
    <text evidence="1">Multifunctional transcription factor that induces cell cycle arrest, DNA repair or apoptosis upon binding to its target DNA sequence. Acts as a tumor suppressor in many tumor types; induces growth arrest or apoptosis depending on the physiological circumstances and cell type. Negatively regulates cell division by controlling expression of a set of genes required for this process. One of the activated genes is an inhibitor of cyclin-dependent kinases. Apoptosis induction seems to be mediated either by stimulation of BAX and FAS antigen expression, or by repression of Bcl-2 expression (By similarity).</text>
</comment>
<comment type="cofactor">
    <cofactor evidence="1">
        <name>Zn(2+)</name>
        <dbReference type="ChEBI" id="CHEBI:29105"/>
    </cofactor>
    <text evidence="1">Binds 1 zinc ion per subunit.</text>
</comment>
<comment type="subunit">
    <text evidence="1">Binds DNA as a homotetramer.</text>
</comment>
<comment type="subcellular location">
    <subcellularLocation>
        <location evidence="1">Cytoplasm</location>
    </subcellularLocation>
    <subcellularLocation>
        <location evidence="1">Nucleus</location>
    </subcellularLocation>
</comment>
<comment type="domain">
    <text evidence="2">The N-terminal and C-terminal disordered regions undergo liquid-liquid phase separation (LLPS) following homotetramerization and activation. Post-translational modifications, such as phosphorylation or lactylation affect the ability to undergo LLPS.</text>
</comment>
<comment type="domain">
    <text evidence="2">The nuclear export signal acts as a transcriptional repression domain. The TADI and TADII motifs (residues 17 to 25 and 48 to 56) correspond both to 9aaTAD motifs which are transactivation domains present in a large number of yeast and animal transcription factors.</text>
</comment>
<comment type="similarity">
    <text evidence="4">Belongs to the p53 family.</text>
</comment>
<keyword id="KW-0010">Activator</keyword>
<keyword id="KW-0053">Apoptosis</keyword>
<keyword id="KW-0131">Cell cycle</keyword>
<keyword id="KW-0963">Cytoplasm</keyword>
<keyword id="KW-0238">DNA-binding</keyword>
<keyword id="KW-0479">Metal-binding</keyword>
<keyword id="KW-0539">Nucleus</keyword>
<keyword id="KW-0597">Phosphoprotein</keyword>
<keyword id="KW-1185">Reference proteome</keyword>
<keyword id="KW-0804">Transcription</keyword>
<keyword id="KW-0805">Transcription regulation</keyword>
<keyword id="KW-0043">Tumor suppressor</keyword>
<keyword id="KW-0862">Zinc</keyword>
<name>P53_XIPMA</name>
<sequence>MEEADLTLPLSQDTFHDLWNNVFLSTENESLPPPEGLLSQNMDFWEDPETMQETKNVPTAPTVPAISNYAGEHGFNLEFNDSGTAKSVTSTYSVKLGKLFCQLAKTTPIGVLVKEEPPQGAVIRATAVYKKTEHVGEVVKRCPHHQSEDLSDNKSHLIRVEGSQLAQYFEDPNTRRHSVTVPYERPQLGSEMTTILLSFMCNSSCMGGMNRRPILTILTLETTEGEVLGRRCFEVRVCACPGRDRKTEEGNLEKSGTKQTKKRKSAPAPDTSTAKKSKSASSGEDEDKEIYTLSIRGRNRYLWFKSLNDGLELMDKTGPKIKQEIPAPSSGKRLLKGGSDSD</sequence>
<proteinExistence type="evidence at transcript level"/>
<organism>
    <name type="scientific">Xiphophorus maculatus</name>
    <name type="common">Southern platyfish</name>
    <name type="synonym">Platypoecilus maculatus</name>
    <dbReference type="NCBI Taxonomy" id="8083"/>
    <lineage>
        <taxon>Eukaryota</taxon>
        <taxon>Metazoa</taxon>
        <taxon>Chordata</taxon>
        <taxon>Craniata</taxon>
        <taxon>Vertebrata</taxon>
        <taxon>Euteleostomi</taxon>
        <taxon>Actinopterygii</taxon>
        <taxon>Neopterygii</taxon>
        <taxon>Teleostei</taxon>
        <taxon>Neoteleostei</taxon>
        <taxon>Acanthomorphata</taxon>
        <taxon>Ovalentaria</taxon>
        <taxon>Atherinomorphae</taxon>
        <taxon>Cyprinodontiformes</taxon>
        <taxon>Poeciliidae</taxon>
        <taxon>Poeciliinae</taxon>
        <taxon>Xiphophorus</taxon>
    </lineage>
</organism>